<feature type="chain" id="PRO_0000170150" description="Large ribosomal subunit protein bL33">
    <location>
        <begin position="1"/>
        <end position="52"/>
    </location>
</feature>
<evidence type="ECO:0000305" key="1"/>
<comment type="similarity">
    <text evidence="1">Belongs to the bacterial ribosomal protein bL33 family.</text>
</comment>
<protein>
    <recommendedName>
        <fullName evidence="1">Large ribosomal subunit protein bL33</fullName>
    </recommendedName>
    <alternativeName>
        <fullName>50S ribosomal protein L33</fullName>
    </alternativeName>
</protein>
<gene>
    <name type="primary">rpmG</name>
    <name type="ordered locus">TC_0428</name>
</gene>
<reference key="1">
    <citation type="journal article" date="2000" name="Nucleic Acids Res.">
        <title>Genome sequences of Chlamydia trachomatis MoPn and Chlamydia pneumoniae AR39.</title>
        <authorList>
            <person name="Read T.D."/>
            <person name="Brunham R.C."/>
            <person name="Shen C."/>
            <person name="Gill S.R."/>
            <person name="Heidelberg J.F."/>
            <person name="White O."/>
            <person name="Hickey E.K."/>
            <person name="Peterson J.D."/>
            <person name="Utterback T.R."/>
            <person name="Berry K.J."/>
            <person name="Bass S."/>
            <person name="Linher K.D."/>
            <person name="Weidman J.F."/>
            <person name="Khouri H.M."/>
            <person name="Craven B."/>
            <person name="Bowman C."/>
            <person name="Dodson R.J."/>
            <person name="Gwinn M.L."/>
            <person name="Nelson W.C."/>
            <person name="DeBoy R.T."/>
            <person name="Kolonay J.F."/>
            <person name="McClarty G."/>
            <person name="Salzberg S.L."/>
            <person name="Eisen J.A."/>
            <person name="Fraser C.M."/>
        </authorList>
    </citation>
    <scope>NUCLEOTIDE SEQUENCE [LARGE SCALE GENOMIC DNA]</scope>
    <source>
        <strain>MoPn / Nigg</strain>
    </source>
</reference>
<accession>Q9PKN7</accession>
<dbReference type="EMBL" id="AE002160">
    <property type="protein sequence ID" value="AAF39284.1"/>
    <property type="molecule type" value="Genomic_DNA"/>
</dbReference>
<dbReference type="PIR" id="C81703">
    <property type="entry name" value="C81703"/>
</dbReference>
<dbReference type="RefSeq" id="WP_010230425.1">
    <property type="nucleotide sequence ID" value="NZ_CP063055.1"/>
</dbReference>
<dbReference type="SMR" id="Q9PKN7"/>
<dbReference type="GeneID" id="1245781"/>
<dbReference type="KEGG" id="cmu:TC_0428"/>
<dbReference type="eggNOG" id="COG0267">
    <property type="taxonomic scope" value="Bacteria"/>
</dbReference>
<dbReference type="HOGENOM" id="CLU_190949_1_1_0"/>
<dbReference type="OrthoDB" id="21586at2"/>
<dbReference type="Proteomes" id="UP000000800">
    <property type="component" value="Chromosome"/>
</dbReference>
<dbReference type="GO" id="GO:0022625">
    <property type="term" value="C:cytosolic large ribosomal subunit"/>
    <property type="evidence" value="ECO:0007669"/>
    <property type="project" value="TreeGrafter"/>
</dbReference>
<dbReference type="GO" id="GO:0003735">
    <property type="term" value="F:structural constituent of ribosome"/>
    <property type="evidence" value="ECO:0007669"/>
    <property type="project" value="InterPro"/>
</dbReference>
<dbReference type="GO" id="GO:0006412">
    <property type="term" value="P:translation"/>
    <property type="evidence" value="ECO:0007669"/>
    <property type="project" value="UniProtKB-UniRule"/>
</dbReference>
<dbReference type="FunFam" id="2.20.28.120:FF:000009">
    <property type="entry name" value="50S ribosomal protein L33"/>
    <property type="match status" value="1"/>
</dbReference>
<dbReference type="Gene3D" id="2.20.28.120">
    <property type="entry name" value="Ribosomal protein L33"/>
    <property type="match status" value="1"/>
</dbReference>
<dbReference type="HAMAP" id="MF_00294">
    <property type="entry name" value="Ribosomal_bL33"/>
    <property type="match status" value="1"/>
</dbReference>
<dbReference type="InterPro" id="IPR001705">
    <property type="entry name" value="Ribosomal_bL33"/>
</dbReference>
<dbReference type="InterPro" id="IPR018264">
    <property type="entry name" value="Ribosomal_bL33_CS"/>
</dbReference>
<dbReference type="InterPro" id="IPR038584">
    <property type="entry name" value="Ribosomal_bL33_sf"/>
</dbReference>
<dbReference type="InterPro" id="IPR011332">
    <property type="entry name" value="Ribosomal_zn-bd"/>
</dbReference>
<dbReference type="NCBIfam" id="NF001860">
    <property type="entry name" value="PRK00595.1"/>
    <property type="match status" value="1"/>
</dbReference>
<dbReference type="NCBIfam" id="TIGR01023">
    <property type="entry name" value="rpmG_bact"/>
    <property type="match status" value="1"/>
</dbReference>
<dbReference type="PANTHER" id="PTHR15238">
    <property type="entry name" value="54S RIBOSOMAL PROTEIN L39, MITOCHONDRIAL"/>
    <property type="match status" value="1"/>
</dbReference>
<dbReference type="PANTHER" id="PTHR15238:SF1">
    <property type="entry name" value="LARGE RIBOSOMAL SUBUNIT PROTEIN BL33M"/>
    <property type="match status" value="1"/>
</dbReference>
<dbReference type="Pfam" id="PF00471">
    <property type="entry name" value="Ribosomal_L33"/>
    <property type="match status" value="1"/>
</dbReference>
<dbReference type="SUPFAM" id="SSF57829">
    <property type="entry name" value="Zn-binding ribosomal proteins"/>
    <property type="match status" value="1"/>
</dbReference>
<dbReference type="PROSITE" id="PS00582">
    <property type="entry name" value="RIBOSOMAL_L33"/>
    <property type="match status" value="1"/>
</dbReference>
<sequence length="52" mass="6328">MASKNREIIKLKSTESSEMYWTVKNKRKTTGRLELKKYDRKLRKHVIFKEAK</sequence>
<proteinExistence type="inferred from homology"/>
<name>RL33_CHLMU</name>
<keyword id="KW-0687">Ribonucleoprotein</keyword>
<keyword id="KW-0689">Ribosomal protein</keyword>
<organism>
    <name type="scientific">Chlamydia muridarum (strain MoPn / Nigg)</name>
    <dbReference type="NCBI Taxonomy" id="243161"/>
    <lineage>
        <taxon>Bacteria</taxon>
        <taxon>Pseudomonadati</taxon>
        <taxon>Chlamydiota</taxon>
        <taxon>Chlamydiia</taxon>
        <taxon>Chlamydiales</taxon>
        <taxon>Chlamydiaceae</taxon>
        <taxon>Chlamydia/Chlamydophila group</taxon>
        <taxon>Chlamydia</taxon>
    </lineage>
</organism>